<proteinExistence type="evidence at transcript level"/>
<reference key="1">
    <citation type="journal article" date="1998" name="J. Biol. Chem.">
        <title>Multiple functions of Pmt1p-mediated protein O-mannosylation in the fungal pathogen Candida albicans.</title>
        <authorList>
            <person name="Timpel C."/>
            <person name="Strahl-Bolsinger S."/>
            <person name="Ziegelbauer K."/>
            <person name="Ernst J.F."/>
        </authorList>
    </citation>
    <scope>NUCLEOTIDE SEQUENCE [GENOMIC DNA]</scope>
    <scope>FUNCTION</scope>
    <source>
        <strain>CAF3-1</strain>
    </source>
</reference>
<reference key="2">
    <citation type="journal article" date="2005" name="Genetics">
        <title>Sequence finishing and gene mapping for Candida albicans chromosome 7 and syntenic analysis against the Saccharomyces cerevisiae genome.</title>
        <authorList>
            <person name="Chibana H."/>
            <person name="Oka N."/>
            <person name="Nakayama H."/>
            <person name="Aoyama T."/>
            <person name="Magee B.B."/>
            <person name="Magee P.T."/>
            <person name="Mikami Y."/>
        </authorList>
    </citation>
    <scope>NUCLEOTIDE SEQUENCE [LARGE SCALE GENOMIC DNA]</scope>
    <source>
        <strain>SC5314 / ATCC MYA-2876</strain>
    </source>
</reference>
<reference key="3">
    <citation type="journal article" date="2004" name="Proc. Natl. Acad. Sci. U.S.A.">
        <title>The diploid genome sequence of Candida albicans.</title>
        <authorList>
            <person name="Jones T."/>
            <person name="Federspiel N.A."/>
            <person name="Chibana H."/>
            <person name="Dungan J."/>
            <person name="Kalman S."/>
            <person name="Magee B.B."/>
            <person name="Newport G."/>
            <person name="Thorstenson Y.R."/>
            <person name="Agabian N."/>
            <person name="Magee P.T."/>
            <person name="Davis R.W."/>
            <person name="Scherer S."/>
        </authorList>
    </citation>
    <scope>NUCLEOTIDE SEQUENCE [LARGE SCALE GENOMIC DNA]</scope>
    <source>
        <strain>SC5314 / ATCC MYA-2876</strain>
    </source>
</reference>
<reference key="4">
    <citation type="journal article" date="2007" name="Genome Biol.">
        <title>Assembly of the Candida albicans genome into sixteen supercontigs aligned on the eight chromosomes.</title>
        <authorList>
            <person name="van het Hoog M."/>
            <person name="Rast T.J."/>
            <person name="Martchenko M."/>
            <person name="Grindle S."/>
            <person name="Dignard D."/>
            <person name="Hogues H."/>
            <person name="Cuomo C."/>
            <person name="Berriman M."/>
            <person name="Scherer S."/>
            <person name="Magee B.B."/>
            <person name="Whiteway M."/>
            <person name="Chibana H."/>
            <person name="Nantel A."/>
            <person name="Magee P.T."/>
        </authorList>
    </citation>
    <scope>GENOME REANNOTATION</scope>
    <source>
        <strain>SC5314 / ATCC MYA-2876</strain>
    </source>
</reference>
<reference key="5">
    <citation type="journal article" date="2013" name="Genome Biol.">
        <title>Assembly of a phased diploid Candida albicans genome facilitates allele-specific measurements and provides a simple model for repeat and indel structure.</title>
        <authorList>
            <person name="Muzzey D."/>
            <person name="Schwartz K."/>
            <person name="Weissman J.S."/>
            <person name="Sherlock G."/>
        </authorList>
    </citation>
    <scope>NUCLEOTIDE SEQUENCE [LARGE SCALE GENOMIC DNA]</scope>
    <scope>GENOME REANNOTATION</scope>
    <source>
        <strain>SC5314 / ATCC MYA-2876</strain>
    </source>
</reference>
<reference key="6">
    <citation type="journal article" date="2004" name="Eukaryot. Cell">
        <title>Pmt-mediated O mannosylation stabilizes an essential component of the secretory apparatus, Sec20p, in Candida albicans.</title>
        <authorList>
            <person name="Weber Y."/>
            <person name="Prill S.K."/>
            <person name="Ernst J.F."/>
        </authorList>
    </citation>
    <scope>FUNCTION</scope>
</reference>
<reference key="7">
    <citation type="journal article" date="2005" name="Infect. Immun.">
        <title>Virulence of the fungal pathogen Candida albicans requires the five isoforms of protein mannosyltransferases.</title>
        <authorList>
            <person name="Rouabhia M."/>
            <person name="Schaller M."/>
            <person name="Corbucci C."/>
            <person name="Vecchiarelli A."/>
            <person name="Prill S.K."/>
            <person name="Giasson L."/>
            <person name="Ernst J.F."/>
        </authorList>
    </citation>
    <scope>DISRUPTION PHENOTYPE</scope>
    <scope>FUNCTION</scope>
</reference>
<reference key="8">
    <citation type="journal article" date="2005" name="Mol. Microbiol.">
        <title>PMT family of Candida albicans: five protein mannosyltransferase isoforms affect growth, morphogenesis and antifungal resistance.</title>
        <authorList>
            <person name="Prill S.K."/>
            <person name="Klinkert B."/>
            <person name="Timpel C."/>
            <person name="Gale C.A."/>
            <person name="Schroppel K."/>
            <person name="Ernst J.F."/>
        </authorList>
    </citation>
    <scope>DISRUPTION PHENOTYPE</scope>
    <scope>FUNCTION</scope>
</reference>
<reference key="9">
    <citation type="journal article" date="2006" name="Antimicrob. Agents Chemother.">
        <title>Protein O-mannosyltransferase isoforms regulate biofilm formation in Candida albicans.</title>
        <authorList>
            <person name="Peltroche-Llacsahuanga H."/>
            <person name="Goyard S."/>
            <person name="d'Enfert C."/>
            <person name="Prill S.K."/>
            <person name="Ernst J.F."/>
        </authorList>
    </citation>
    <scope>DISRUPTION PHENOTYPE</scope>
    <scope>FUNCTION</scope>
</reference>
<reference key="10">
    <citation type="journal article" date="2010" name="Yeast">
        <title>The Candida albicans cell wall protein Rhd3/Pga29 is abundant in the yeast form and contributes to virulence.</title>
        <authorList>
            <person name="de Boer A.D."/>
            <person name="de Groot P.W."/>
            <person name="Weindl G."/>
            <person name="Schaller M."/>
            <person name="Riedel D."/>
            <person name="Diez-Orejas R."/>
            <person name="Klis F.M."/>
            <person name="de Koster C.G."/>
            <person name="Dekker H.L."/>
            <person name="Gross U."/>
            <person name="Bader O."/>
            <person name="Weig M."/>
        </authorList>
    </citation>
    <scope>FUNCTION</scope>
</reference>
<reference key="11">
    <citation type="journal article" date="2011" name="Mol. Microbiol.">
        <title>Damage to the glycoshield activates PMT-directed O-mannosylation via the Msb2-Cek1 pathway in Candida albicans.</title>
        <authorList>
            <person name="Cantero P.D."/>
            <person name="Ernst J.F."/>
        </authorList>
    </citation>
    <scope>INDUCTION</scope>
</reference>
<dbReference type="EC" id="2.4.1.109" evidence="1"/>
<dbReference type="EMBL" id="AF000232">
    <property type="protein sequence ID" value="AAC31119.1"/>
    <property type="molecule type" value="Genomic_DNA"/>
</dbReference>
<dbReference type="EMBL" id="AP006852">
    <property type="protein sequence ID" value="BAE44795.1"/>
    <property type="molecule type" value="Genomic_DNA"/>
</dbReference>
<dbReference type="EMBL" id="CP017629">
    <property type="protein sequence ID" value="AOW30636.1"/>
    <property type="molecule type" value="Genomic_DNA"/>
</dbReference>
<dbReference type="RefSeq" id="XP_716993.1">
    <property type="nucleotide sequence ID" value="XM_711900.2"/>
</dbReference>
<dbReference type="SMR" id="O74189"/>
<dbReference type="BioGRID" id="1224487">
    <property type="interactions" value="3"/>
</dbReference>
<dbReference type="FunCoup" id="O74189">
    <property type="interactions" value="71"/>
</dbReference>
<dbReference type="STRING" id="237561.O74189"/>
<dbReference type="BindingDB" id="O74189"/>
<dbReference type="ChEMBL" id="CHEMBL3534"/>
<dbReference type="CAZy" id="GT39">
    <property type="family name" value="Glycosyltransferase Family 39"/>
</dbReference>
<dbReference type="GlyCosmos" id="O74189">
    <property type="glycosylation" value="5 sites, No reported glycans"/>
</dbReference>
<dbReference type="EnsemblFungi" id="C7_02890C_A-T">
    <property type="protein sequence ID" value="C7_02890C_A-T-p1"/>
    <property type="gene ID" value="C7_02890C_A"/>
</dbReference>
<dbReference type="GeneID" id="3641393"/>
<dbReference type="KEGG" id="cal:CAALFM_C702890CA"/>
<dbReference type="CGD" id="CAL0000192847">
    <property type="gene designation" value="PMT1"/>
</dbReference>
<dbReference type="VEuPathDB" id="FungiDB:C7_02890C_A"/>
<dbReference type="eggNOG" id="KOG3359">
    <property type="taxonomic scope" value="Eukaryota"/>
</dbReference>
<dbReference type="HOGENOM" id="CLU_008438_2_0_1"/>
<dbReference type="InParanoid" id="O74189"/>
<dbReference type="OMA" id="KNVTPRL"/>
<dbReference type="OrthoDB" id="292747at2759"/>
<dbReference type="BRENDA" id="2.4.1.109">
    <property type="organism ID" value="1096"/>
</dbReference>
<dbReference type="UniPathway" id="UPA00378"/>
<dbReference type="PHI-base" id="PHI:451"/>
<dbReference type="PRO" id="PR:O74189"/>
<dbReference type="Proteomes" id="UP000000559">
    <property type="component" value="Chromosome 7"/>
</dbReference>
<dbReference type="GO" id="GO:0005783">
    <property type="term" value="C:endoplasmic reticulum"/>
    <property type="evidence" value="ECO:0000318"/>
    <property type="project" value="GO_Central"/>
</dbReference>
<dbReference type="GO" id="GO:0005789">
    <property type="term" value="C:endoplasmic reticulum membrane"/>
    <property type="evidence" value="ECO:0007669"/>
    <property type="project" value="UniProtKB-SubCell"/>
</dbReference>
<dbReference type="GO" id="GO:0005886">
    <property type="term" value="C:plasma membrane"/>
    <property type="evidence" value="ECO:0000314"/>
    <property type="project" value="CGD"/>
</dbReference>
<dbReference type="GO" id="GO:0004169">
    <property type="term" value="F:dolichyl-phosphate-mannose-protein mannosyltransferase activity"/>
    <property type="evidence" value="ECO:0000318"/>
    <property type="project" value="GO_Central"/>
</dbReference>
<dbReference type="GO" id="GO:0000030">
    <property type="term" value="F:mannosyltransferase activity"/>
    <property type="evidence" value="ECO:0000315"/>
    <property type="project" value="CGD"/>
</dbReference>
<dbReference type="GO" id="GO:0051701">
    <property type="term" value="P:biological process involved in interaction with host"/>
    <property type="evidence" value="ECO:0000315"/>
    <property type="project" value="CGD"/>
</dbReference>
<dbReference type="GO" id="GO:0031589">
    <property type="term" value="P:cell-substrate adhesion"/>
    <property type="evidence" value="ECO:0000315"/>
    <property type="project" value="CGD"/>
</dbReference>
<dbReference type="GO" id="GO:0009267">
    <property type="term" value="P:cellular response to starvation"/>
    <property type="evidence" value="ECO:0000315"/>
    <property type="project" value="CGD"/>
</dbReference>
<dbReference type="GO" id="GO:0030447">
    <property type="term" value="P:filamentous growth"/>
    <property type="evidence" value="ECO:0000315"/>
    <property type="project" value="CGD"/>
</dbReference>
<dbReference type="GO" id="GO:0036170">
    <property type="term" value="P:filamentous growth of a population of unicellular organisms in response to starvation"/>
    <property type="evidence" value="ECO:0000315"/>
    <property type="project" value="CGD"/>
</dbReference>
<dbReference type="GO" id="GO:0031505">
    <property type="term" value="P:fungal-type cell wall organization"/>
    <property type="evidence" value="ECO:0000315"/>
    <property type="project" value="CGD"/>
</dbReference>
<dbReference type="GO" id="GO:0045861">
    <property type="term" value="P:negative regulation of proteolysis"/>
    <property type="evidence" value="ECO:0000315"/>
    <property type="project" value="CGD"/>
</dbReference>
<dbReference type="GO" id="GO:0006493">
    <property type="term" value="P:protein O-linked glycosylation"/>
    <property type="evidence" value="ECO:0000315"/>
    <property type="project" value="CGD"/>
</dbReference>
<dbReference type="GO" id="GO:0035269">
    <property type="term" value="P:protein O-linked mannosylation"/>
    <property type="evidence" value="ECO:0000315"/>
    <property type="project" value="CGD"/>
</dbReference>
<dbReference type="GO" id="GO:0044011">
    <property type="term" value="P:single-species biofilm formation on inanimate substrate"/>
    <property type="evidence" value="ECO:0000315"/>
    <property type="project" value="CGD"/>
</dbReference>
<dbReference type="CDD" id="cd23283">
    <property type="entry name" value="beta-trefoil_MIR_PMT1-like"/>
    <property type="match status" value="1"/>
</dbReference>
<dbReference type="Gene3D" id="2.80.10.50">
    <property type="match status" value="1"/>
</dbReference>
<dbReference type="InterPro" id="IPR027005">
    <property type="entry name" value="GlyclTrfase_39-like"/>
</dbReference>
<dbReference type="InterPro" id="IPR003342">
    <property type="entry name" value="Glyco_trans_39/83"/>
</dbReference>
<dbReference type="InterPro" id="IPR036300">
    <property type="entry name" value="MIR_dom_sf"/>
</dbReference>
<dbReference type="InterPro" id="IPR016093">
    <property type="entry name" value="MIR_motif"/>
</dbReference>
<dbReference type="InterPro" id="IPR032421">
    <property type="entry name" value="PMT_4TMC"/>
</dbReference>
<dbReference type="PANTHER" id="PTHR10050">
    <property type="entry name" value="DOLICHYL-PHOSPHATE-MANNOSE--PROTEIN MANNOSYLTRANSFERASE"/>
    <property type="match status" value="1"/>
</dbReference>
<dbReference type="PANTHER" id="PTHR10050:SF50">
    <property type="entry name" value="DOLICHYL-PHOSPHATE-MANNOSE--PROTEIN MANNOSYLTRANSFERASE 1-RELATED"/>
    <property type="match status" value="1"/>
</dbReference>
<dbReference type="Pfam" id="PF02815">
    <property type="entry name" value="MIR"/>
    <property type="match status" value="1"/>
</dbReference>
<dbReference type="Pfam" id="PF02366">
    <property type="entry name" value="PMT"/>
    <property type="match status" value="1"/>
</dbReference>
<dbReference type="Pfam" id="PF16192">
    <property type="entry name" value="PMT_4TMC"/>
    <property type="match status" value="1"/>
</dbReference>
<dbReference type="SMART" id="SM00472">
    <property type="entry name" value="MIR"/>
    <property type="match status" value="3"/>
</dbReference>
<dbReference type="SUPFAM" id="SSF82109">
    <property type="entry name" value="MIR domain"/>
    <property type="match status" value="1"/>
</dbReference>
<dbReference type="PROSITE" id="PS50919">
    <property type="entry name" value="MIR"/>
    <property type="match status" value="3"/>
</dbReference>
<keyword id="KW-0256">Endoplasmic reticulum</keyword>
<keyword id="KW-0325">Glycoprotein</keyword>
<keyword id="KW-0328">Glycosyltransferase</keyword>
<keyword id="KW-0472">Membrane</keyword>
<keyword id="KW-1185">Reference proteome</keyword>
<keyword id="KW-0677">Repeat</keyword>
<keyword id="KW-0808">Transferase</keyword>
<keyword id="KW-0812">Transmembrane</keyword>
<keyword id="KW-1133">Transmembrane helix</keyword>
<name>PMT1_CANAL</name>
<feature type="chain" id="PRO_0000121498" description="Dolichyl-phosphate-mannose--protein mannosyltransferase 1">
    <location>
        <begin position="1"/>
        <end position="877"/>
    </location>
</feature>
<feature type="transmembrane region" description="Helical" evidence="2">
    <location>
        <begin position="109"/>
        <end position="129"/>
    </location>
</feature>
<feature type="transmembrane region" description="Helical" evidence="2">
    <location>
        <begin position="150"/>
        <end position="170"/>
    </location>
</feature>
<feature type="transmembrane region" description="Helical" evidence="2">
    <location>
        <begin position="196"/>
        <end position="216"/>
    </location>
</feature>
<feature type="transmembrane region" description="Helical" evidence="2">
    <location>
        <begin position="226"/>
        <end position="246"/>
    </location>
</feature>
<feature type="transmembrane region" description="Helical" evidence="2">
    <location>
        <begin position="252"/>
        <end position="272"/>
    </location>
</feature>
<feature type="transmembrane region" description="Helical" evidence="2">
    <location>
        <begin position="291"/>
        <end position="311"/>
    </location>
</feature>
<feature type="transmembrane region" description="Helical" evidence="2">
    <location>
        <begin position="604"/>
        <end position="624"/>
    </location>
</feature>
<feature type="transmembrane region" description="Helical" evidence="2">
    <location>
        <begin position="643"/>
        <end position="663"/>
    </location>
</feature>
<feature type="transmembrane region" description="Helical" evidence="2">
    <location>
        <begin position="666"/>
        <end position="686"/>
    </location>
</feature>
<feature type="transmembrane region" description="Helical" evidence="2">
    <location>
        <begin position="700"/>
        <end position="720"/>
    </location>
</feature>
<feature type="domain" description="MIR 1" evidence="3">
    <location>
        <begin position="340"/>
        <end position="394"/>
    </location>
</feature>
<feature type="domain" description="MIR 2" evidence="3">
    <location>
        <begin position="403"/>
        <end position="462"/>
    </location>
</feature>
<feature type="domain" description="MIR 3" evidence="3">
    <location>
        <begin position="472"/>
        <end position="528"/>
    </location>
</feature>
<feature type="region of interest" description="Disordered" evidence="4">
    <location>
        <begin position="778"/>
        <end position="877"/>
    </location>
</feature>
<feature type="compositionally biased region" description="Basic and acidic residues" evidence="4">
    <location>
        <begin position="783"/>
        <end position="799"/>
    </location>
</feature>
<feature type="compositionally biased region" description="Basic and acidic residues" evidence="4">
    <location>
        <begin position="807"/>
        <end position="816"/>
    </location>
</feature>
<feature type="compositionally biased region" description="Basic and acidic residues" evidence="4">
    <location>
        <begin position="847"/>
        <end position="857"/>
    </location>
</feature>
<feature type="glycosylation site" description="N-linked (GlcNAc...) asparagine" evidence="2">
    <location>
        <position position="83"/>
    </location>
</feature>
<feature type="glycosylation site" description="N-linked (GlcNAc...) asparagine" evidence="2">
    <location>
        <position position="195"/>
    </location>
</feature>
<feature type="glycosylation site" description="N-linked (GlcNAc...) asparagine" evidence="2">
    <location>
        <position position="395"/>
    </location>
</feature>
<feature type="glycosylation site" description="N-linked (GlcNAc...) asparagine" evidence="2">
    <location>
        <position position="400"/>
    </location>
</feature>
<feature type="glycosylation site" description="N-linked (GlcNAc...) asparagine" evidence="2">
    <location>
        <position position="721"/>
    </location>
</feature>
<organism>
    <name type="scientific">Candida albicans (strain SC5314 / ATCC MYA-2876)</name>
    <name type="common">Yeast</name>
    <dbReference type="NCBI Taxonomy" id="237561"/>
    <lineage>
        <taxon>Eukaryota</taxon>
        <taxon>Fungi</taxon>
        <taxon>Dikarya</taxon>
        <taxon>Ascomycota</taxon>
        <taxon>Saccharomycotina</taxon>
        <taxon>Pichiomycetes</taxon>
        <taxon>Debaryomycetaceae</taxon>
        <taxon>Candida/Lodderomyces clade</taxon>
        <taxon>Candida</taxon>
    </lineage>
</organism>
<comment type="function">
    <text evidence="5 6 7 8 9 11">Protein mannosyltransferase (PMT) involved in hyphal growth and drug sensitivity. Transfers mannose from Dol-P-mannose to Ser or Thr residues on proteins. PMT1, PMT2 and PMT4 account for most of the protein-O-glycosylation activity, while PMT5 and PMT6 may specifically modulate a much narrower spectrum of target proteins. Accounts for the O-glycosylation of the cell wall proteins KRE9, PIR2, RHD3, and ALS1, as well as the SEC20 t-SNARE component. O-glycosylation of SEC20 is essential for its stability. Required for filamentation and early phases of biofilm formation.</text>
</comment>
<comment type="catalytic activity">
    <reaction evidence="1 12">
        <text>a di-trans,poly-cis-dolichyl beta-D-mannosyl phosphate + L-seryl-[protein] = 3-O-(alpha-D-mannosyl)-L-seryl-[protein] + a di-trans,poly-cis-dolichyl phosphate + H(+)</text>
        <dbReference type="Rhea" id="RHEA:17377"/>
        <dbReference type="Rhea" id="RHEA-COMP:9863"/>
        <dbReference type="Rhea" id="RHEA-COMP:13546"/>
        <dbReference type="Rhea" id="RHEA-COMP:19498"/>
        <dbReference type="Rhea" id="RHEA-COMP:19501"/>
        <dbReference type="ChEBI" id="CHEBI:15378"/>
        <dbReference type="ChEBI" id="CHEBI:29999"/>
        <dbReference type="ChEBI" id="CHEBI:57683"/>
        <dbReference type="ChEBI" id="CHEBI:58211"/>
        <dbReference type="ChEBI" id="CHEBI:137321"/>
        <dbReference type="EC" id="2.4.1.109"/>
    </reaction>
</comment>
<comment type="catalytic activity">
    <reaction evidence="1 12">
        <text>a di-trans,poly-cis-dolichyl beta-D-mannosyl phosphate + L-threonyl-[protein] = 3-O-(alpha-D-mannosyl)-L-threonyl-[protein] + a di-trans,poly-cis-dolichyl phosphate + H(+)</text>
        <dbReference type="Rhea" id="RHEA:53396"/>
        <dbReference type="Rhea" id="RHEA-COMP:11060"/>
        <dbReference type="Rhea" id="RHEA-COMP:13547"/>
        <dbReference type="Rhea" id="RHEA-COMP:19498"/>
        <dbReference type="Rhea" id="RHEA-COMP:19501"/>
        <dbReference type="ChEBI" id="CHEBI:15378"/>
        <dbReference type="ChEBI" id="CHEBI:30013"/>
        <dbReference type="ChEBI" id="CHEBI:57683"/>
        <dbReference type="ChEBI" id="CHEBI:58211"/>
        <dbReference type="ChEBI" id="CHEBI:137323"/>
        <dbReference type="EC" id="2.4.1.109"/>
    </reaction>
</comment>
<comment type="pathway">
    <text evidence="14">Protein modification; protein glycosylation.</text>
</comment>
<comment type="subunit">
    <text evidence="1">PMT1 and PMT2 form a functional heterodimer.</text>
</comment>
<comment type="subcellular location">
    <subcellularLocation>
        <location>Endoplasmic reticulum membrane</location>
        <topology evidence="1">Multi-pass membrane protein</topology>
    </subcellularLocation>
</comment>
<comment type="induction">
    <text evidence="10">Transcript levels are increased at least twofold by tunicamycin and Congo red. Both MSB2 and CEK1 are required to down-regulate PMT1 transcript levels in cells with intact glycostructures.</text>
</comment>
<comment type="disruption phenotype">
    <text evidence="6 7 8">Shows altered cell wall composition with a significant decrease in wall mannoproteins. Impairs biofilm formation and shows reduced virulence in a mouse model of hematogenously disseminated candidiasis (HDC) and using reconstituted human epithelium (RHE) or engineered human oral mucosa (EHOM).</text>
</comment>
<comment type="similarity">
    <text evidence="14">Belongs to the glycosyltransferase 39 family.</text>
</comment>
<gene>
    <name type="primary">PMT1</name>
    <name type="ordered locus">CAALFM_C702890CA</name>
    <name evidence="13" type="ORF">CaJ7.0330</name>
    <name type="ORF">CaO19.12638</name>
    <name type="ORF">CaO19.5171</name>
</gene>
<evidence type="ECO:0000250" key="1">
    <source>
        <dbReference type="UniProtKB" id="P33775"/>
    </source>
</evidence>
<evidence type="ECO:0000255" key="2"/>
<evidence type="ECO:0000255" key="3">
    <source>
        <dbReference type="PROSITE-ProRule" id="PRU00131"/>
    </source>
</evidence>
<evidence type="ECO:0000256" key="4">
    <source>
        <dbReference type="SAM" id="MobiDB-lite"/>
    </source>
</evidence>
<evidence type="ECO:0000269" key="5">
    <source>
    </source>
</evidence>
<evidence type="ECO:0000269" key="6">
    <source>
    </source>
</evidence>
<evidence type="ECO:0000269" key="7">
    <source>
    </source>
</evidence>
<evidence type="ECO:0000269" key="8">
    <source>
    </source>
</evidence>
<evidence type="ECO:0000269" key="9">
    <source>
    </source>
</evidence>
<evidence type="ECO:0000269" key="10">
    <source>
    </source>
</evidence>
<evidence type="ECO:0000269" key="11">
    <source>
    </source>
</evidence>
<evidence type="ECO:0000303" key="12">
    <source>
    </source>
</evidence>
<evidence type="ECO:0000303" key="13">
    <source>
    </source>
</evidence>
<evidence type="ECO:0000305" key="14"/>
<sequence>MAKKPVTPASKVAAKQAAVRSRHQEDVFTLDPLIDPIFQKGELRSYLVTEPSPSVLKKRSIHTKEYWMLSSLLLIAFYVRMYNLSNPNSVVFDEVHFGGFARKYILGTFFMDVHPPLAKMLFGAVGAIGGFKGDFEFKSIGDKFPDSTPYIFMRQFPALLGVGTVILCYLTLRQSGVRPIIAYITTFLLIIENSNVTISRYILLDSPLIFFIAAAIYAWKKFEIQIPFTFGWYRSLLATGIALGLALSSKWVGLFTVAWVGFLCIYQLWFLIGDLSVSTKKIWGHFFARGIILLGVPIALYLGFFAIHFQLLNKEGDGGAFMSSAFRAGLQGNKIPRDITEQVGLGSVVTIRHVDTQGGYLHSHEHFYQTGSKQQQITLYPHLDSNNKWLIEPYNGTIHNETFVPLINGMKIRLKHINTGRRLHSHDEKPPVSERDWQKECSCYGYDGFAGDANDDWVVEIVNYRSQKGEAQTFVKAINTIFRLRHAMTGHYLFSSEVKLPEWGFGQQEVTSASQGKRALTHWYIETNENSILPPSEAKIINYPKLSLWQKVVESHKRMWKINQGLTSHHHWQSSPSEWPLLLRGINYWNKEHKQVYLLGNAVTWWAATLSIITFGTYVLVTVFRWHLGTPLSTNKHVFNFNVQTFSYVLGWALHYLPFFIMGRQLFLHHYLPALYFGILALGHFFEIFTGYLTSRSKYFQQVAFVLVGLFSILSLVFYVNYSSLIYGTPWTKASCELTKPFSGWDYNCGTFFDTLGEYDIQEKSLASESEIPTETVVVEAKQTPKAEPKLAKQDDHIESPAAAEPVEEKEVKEEVEQLAPPLAVDFEEETPKVEDPQVADVDASSNDEKSVEEKQQQEQQQEQEQVEDESVHQVQQ</sequence>
<protein>
    <recommendedName>
        <fullName>Dolichyl-phosphate-mannose--protein mannosyltransferase 1</fullName>
        <shortName>Protein mannosyltransferase 1</shortName>
        <ecNumber evidence="1">2.4.1.109</ecNumber>
    </recommendedName>
</protein>
<accession>O74189</accession>
<accession>A0A1D8PR95</accession>
<accession>Q3MP65</accession>
<accession>Q5A5A9</accession>